<feature type="chain" id="PRO_0000183671" description="Cytochrome c oxidase subunit 2">
    <location>
        <begin position="1"/>
        <end position="227"/>
    </location>
</feature>
<feature type="topological domain" description="Mitochondrial intermembrane" evidence="3">
    <location>
        <begin position="1"/>
        <end position="14"/>
    </location>
</feature>
<feature type="transmembrane region" description="Helical; Name=I" evidence="3">
    <location>
        <begin position="15"/>
        <end position="45"/>
    </location>
</feature>
<feature type="topological domain" description="Mitochondrial matrix" evidence="3">
    <location>
        <begin position="46"/>
        <end position="59"/>
    </location>
</feature>
<feature type="transmembrane region" description="Helical; Name=II" evidence="3">
    <location>
        <begin position="60"/>
        <end position="87"/>
    </location>
</feature>
<feature type="topological domain" description="Mitochondrial intermembrane" evidence="3">
    <location>
        <begin position="88"/>
        <end position="227"/>
    </location>
</feature>
<feature type="binding site" evidence="3">
    <location>
        <position position="161"/>
    </location>
    <ligand>
        <name>Cu cation</name>
        <dbReference type="ChEBI" id="CHEBI:23378"/>
        <label>A1</label>
    </ligand>
</feature>
<feature type="binding site" evidence="3">
    <location>
        <position position="196"/>
    </location>
    <ligand>
        <name>Cu cation</name>
        <dbReference type="ChEBI" id="CHEBI:23378"/>
        <label>A1</label>
    </ligand>
</feature>
<feature type="binding site" evidence="3">
    <location>
        <position position="196"/>
    </location>
    <ligand>
        <name>Cu cation</name>
        <dbReference type="ChEBI" id="CHEBI:23378"/>
        <label>A2</label>
    </ligand>
</feature>
<feature type="binding site" evidence="3">
    <location>
        <position position="198"/>
    </location>
    <ligand>
        <name>Cu cation</name>
        <dbReference type="ChEBI" id="CHEBI:23378"/>
        <label>A2</label>
    </ligand>
</feature>
<feature type="binding site" evidence="3">
    <location>
        <position position="198"/>
    </location>
    <ligand>
        <name>Mg(2+)</name>
        <dbReference type="ChEBI" id="CHEBI:18420"/>
        <note>ligand shared with MT-CO1</note>
    </ligand>
</feature>
<feature type="binding site" evidence="3">
    <location>
        <position position="200"/>
    </location>
    <ligand>
        <name>Cu cation</name>
        <dbReference type="ChEBI" id="CHEBI:23378"/>
        <label>A1</label>
    </ligand>
</feature>
<feature type="binding site" evidence="3">
    <location>
        <position position="200"/>
    </location>
    <ligand>
        <name>Cu cation</name>
        <dbReference type="ChEBI" id="CHEBI:23378"/>
        <label>A2</label>
    </ligand>
</feature>
<feature type="binding site" evidence="3">
    <location>
        <position position="204"/>
    </location>
    <ligand>
        <name>Cu cation</name>
        <dbReference type="ChEBI" id="CHEBI:23378"/>
        <label>A2</label>
    </ligand>
</feature>
<feature type="binding site" evidence="3">
    <location>
        <position position="207"/>
    </location>
    <ligand>
        <name>Cu cation</name>
        <dbReference type="ChEBI" id="CHEBI:23378"/>
        <label>A1</label>
    </ligand>
</feature>
<dbReference type="EC" id="7.1.1.9"/>
<dbReference type="EMBL" id="L22782">
    <property type="protein sequence ID" value="AAA20569.1"/>
    <property type="molecule type" value="Genomic_DNA"/>
</dbReference>
<dbReference type="PIR" id="I61843">
    <property type="entry name" value="I61843"/>
</dbReference>
<dbReference type="RefSeq" id="YP_009163345.1">
    <property type="nucleotide sequence ID" value="NC_027740.1"/>
</dbReference>
<dbReference type="SMR" id="P98042"/>
<dbReference type="GeneID" id="25397694"/>
<dbReference type="CTD" id="4513"/>
<dbReference type="GO" id="GO:0005743">
    <property type="term" value="C:mitochondrial inner membrane"/>
    <property type="evidence" value="ECO:0007669"/>
    <property type="project" value="UniProtKB-SubCell"/>
</dbReference>
<dbReference type="GO" id="GO:0045277">
    <property type="term" value="C:respiratory chain complex IV"/>
    <property type="evidence" value="ECO:0000250"/>
    <property type="project" value="UniProtKB"/>
</dbReference>
<dbReference type="GO" id="GO:0005507">
    <property type="term" value="F:copper ion binding"/>
    <property type="evidence" value="ECO:0007669"/>
    <property type="project" value="InterPro"/>
</dbReference>
<dbReference type="GO" id="GO:0004129">
    <property type="term" value="F:cytochrome-c oxidase activity"/>
    <property type="evidence" value="ECO:0007669"/>
    <property type="project" value="UniProtKB-EC"/>
</dbReference>
<dbReference type="GO" id="GO:0042773">
    <property type="term" value="P:ATP synthesis coupled electron transport"/>
    <property type="evidence" value="ECO:0007669"/>
    <property type="project" value="TreeGrafter"/>
</dbReference>
<dbReference type="CDD" id="cd13912">
    <property type="entry name" value="CcO_II_C"/>
    <property type="match status" value="1"/>
</dbReference>
<dbReference type="FunFam" id="1.10.287.90:FF:000001">
    <property type="entry name" value="Cytochrome c oxidase subunit 2"/>
    <property type="match status" value="1"/>
</dbReference>
<dbReference type="FunFam" id="2.60.40.420:FF:000001">
    <property type="entry name" value="Cytochrome c oxidase subunit 2"/>
    <property type="match status" value="1"/>
</dbReference>
<dbReference type="Gene3D" id="1.10.287.90">
    <property type="match status" value="1"/>
</dbReference>
<dbReference type="Gene3D" id="2.60.40.420">
    <property type="entry name" value="Cupredoxins - blue copper proteins"/>
    <property type="match status" value="1"/>
</dbReference>
<dbReference type="InterPro" id="IPR045187">
    <property type="entry name" value="CcO_II"/>
</dbReference>
<dbReference type="InterPro" id="IPR002429">
    <property type="entry name" value="CcO_II-like_C"/>
</dbReference>
<dbReference type="InterPro" id="IPR034210">
    <property type="entry name" value="CcO_II_C"/>
</dbReference>
<dbReference type="InterPro" id="IPR001505">
    <property type="entry name" value="Copper_CuA"/>
</dbReference>
<dbReference type="InterPro" id="IPR008972">
    <property type="entry name" value="Cupredoxin"/>
</dbReference>
<dbReference type="InterPro" id="IPR014222">
    <property type="entry name" value="Cyt_c_oxidase_su2"/>
</dbReference>
<dbReference type="InterPro" id="IPR011759">
    <property type="entry name" value="Cyt_c_oxidase_su2_TM_dom"/>
</dbReference>
<dbReference type="InterPro" id="IPR036257">
    <property type="entry name" value="Cyt_c_oxidase_su2_TM_sf"/>
</dbReference>
<dbReference type="NCBIfam" id="TIGR02866">
    <property type="entry name" value="CoxB"/>
    <property type="match status" value="1"/>
</dbReference>
<dbReference type="PANTHER" id="PTHR22888:SF9">
    <property type="entry name" value="CYTOCHROME C OXIDASE SUBUNIT 2"/>
    <property type="match status" value="1"/>
</dbReference>
<dbReference type="PANTHER" id="PTHR22888">
    <property type="entry name" value="CYTOCHROME C OXIDASE, SUBUNIT II"/>
    <property type="match status" value="1"/>
</dbReference>
<dbReference type="Pfam" id="PF00116">
    <property type="entry name" value="COX2"/>
    <property type="match status" value="1"/>
</dbReference>
<dbReference type="Pfam" id="PF02790">
    <property type="entry name" value="COX2_TM"/>
    <property type="match status" value="1"/>
</dbReference>
<dbReference type="PRINTS" id="PR01166">
    <property type="entry name" value="CYCOXIDASEII"/>
</dbReference>
<dbReference type="SUPFAM" id="SSF49503">
    <property type="entry name" value="Cupredoxins"/>
    <property type="match status" value="1"/>
</dbReference>
<dbReference type="SUPFAM" id="SSF81464">
    <property type="entry name" value="Cytochrome c oxidase subunit II-like, transmembrane region"/>
    <property type="match status" value="1"/>
</dbReference>
<dbReference type="PROSITE" id="PS00078">
    <property type="entry name" value="COX2"/>
    <property type="match status" value="1"/>
</dbReference>
<dbReference type="PROSITE" id="PS50857">
    <property type="entry name" value="COX2_CUA"/>
    <property type="match status" value="1"/>
</dbReference>
<dbReference type="PROSITE" id="PS50999">
    <property type="entry name" value="COX2_TM"/>
    <property type="match status" value="1"/>
</dbReference>
<proteinExistence type="inferred from homology"/>
<accession>P98042</accession>
<organism>
    <name type="scientific">Propithecus tattersalli</name>
    <name type="common">Golden-crowned Sifaka</name>
    <name type="synonym">Tattersall's sifaka</name>
    <dbReference type="NCBI Taxonomy" id="30601"/>
    <lineage>
        <taxon>Eukaryota</taxon>
        <taxon>Metazoa</taxon>
        <taxon>Chordata</taxon>
        <taxon>Craniata</taxon>
        <taxon>Vertebrata</taxon>
        <taxon>Euteleostomi</taxon>
        <taxon>Mammalia</taxon>
        <taxon>Eutheria</taxon>
        <taxon>Euarchontoglires</taxon>
        <taxon>Primates</taxon>
        <taxon>Strepsirrhini</taxon>
        <taxon>Lemuriformes</taxon>
        <taxon>Indriidae</taxon>
        <taxon>Propithecus</taxon>
    </lineage>
</organism>
<gene>
    <name type="primary">MT-CO2</name>
    <name type="synonym">COII</name>
    <name type="synonym">COX2</name>
    <name type="synonym">COXII</name>
    <name type="synonym">MTCO2</name>
</gene>
<geneLocation type="mitochondrion"/>
<evidence type="ECO:0000250" key="1">
    <source>
        <dbReference type="UniProtKB" id="P00403"/>
    </source>
</evidence>
<evidence type="ECO:0000250" key="2">
    <source>
        <dbReference type="UniProtKB" id="P00410"/>
    </source>
</evidence>
<evidence type="ECO:0000250" key="3">
    <source>
        <dbReference type="UniProtKB" id="P68530"/>
    </source>
</evidence>
<evidence type="ECO:0000305" key="4"/>
<comment type="function">
    <text evidence="2">Component of the cytochrome c oxidase, the last enzyme in the mitochondrial electron transport chain which drives oxidative phosphorylation. The respiratory chain contains 3 multisubunit complexes succinate dehydrogenase (complex II, CII), ubiquinol-cytochrome c oxidoreductase (cytochrome b-c1 complex, complex III, CIII) and cytochrome c oxidase (complex IV, CIV), that cooperate to transfer electrons derived from NADH and succinate to molecular oxygen, creating an electrochemical gradient over the inner membrane that drives transmembrane transport and the ATP synthase. Cytochrome c oxidase is the component of the respiratory chain that catalyzes the reduction of oxygen to water. Electrons originating from reduced cytochrome c in the intermembrane space (IMS) are transferred via the dinuclear copper A center (CU(A)) of subunit 2 and heme A of subunit 1 to the active site in subunit 1, a binuclear center (BNC) formed by heme A3 and copper B (CU(B)). The BNC reduces molecular oxygen to 2 water molecules using 4 electrons from cytochrome c in the IMS and 4 protons from the mitochondrial matrix.</text>
</comment>
<comment type="catalytic activity">
    <reaction evidence="2">
        <text>4 Fe(II)-[cytochrome c] + O2 + 8 H(+)(in) = 4 Fe(III)-[cytochrome c] + 2 H2O + 4 H(+)(out)</text>
        <dbReference type="Rhea" id="RHEA:11436"/>
        <dbReference type="Rhea" id="RHEA-COMP:10350"/>
        <dbReference type="Rhea" id="RHEA-COMP:14399"/>
        <dbReference type="ChEBI" id="CHEBI:15377"/>
        <dbReference type="ChEBI" id="CHEBI:15378"/>
        <dbReference type="ChEBI" id="CHEBI:15379"/>
        <dbReference type="ChEBI" id="CHEBI:29033"/>
        <dbReference type="ChEBI" id="CHEBI:29034"/>
        <dbReference type="EC" id="7.1.1.9"/>
    </reaction>
    <physiologicalReaction direction="left-to-right" evidence="2">
        <dbReference type="Rhea" id="RHEA:11437"/>
    </physiologicalReaction>
</comment>
<comment type="cofactor">
    <cofactor evidence="3">
        <name>Cu cation</name>
        <dbReference type="ChEBI" id="CHEBI:23378"/>
    </cofactor>
    <text evidence="3">Binds a dinuclear copper A center per subunit.</text>
</comment>
<comment type="subunit">
    <text evidence="1 3">Component of the cytochrome c oxidase (complex IV, CIV), a multisubunit enzyme composed of 14 subunits. The complex is composed of a catalytic core of 3 subunits MT-CO1, MT-CO2 and MT-CO3, encoded in the mitochondrial DNA, and 11 supernumerary subunits COX4I, COX5A, COX5B, COX6A, COX6B, COX6C, COX7A, COX7B, COX7C, COX8 and NDUFA4, which are encoded in the nuclear genome. The complex exists as a monomer or a dimer and forms supercomplexes (SCs) in the inner mitochondrial membrane with NADH-ubiquinone oxidoreductase (complex I, CI) and ubiquinol-cytochrome c oxidoreductase (cytochrome b-c1 complex, complex III, CIII), resulting in different assemblies (supercomplex SCI(1)III(2)IV(1) and megacomplex MCI(2)III(2)IV(2)) (By similarity). Found in a complex with TMEM177, COA6, COX18, COX20, SCO1 and SCO2. Interacts with TMEM177 in a COX20-dependent manner. Interacts with COX20. Interacts with COX16 (By similarity).</text>
</comment>
<comment type="subcellular location">
    <subcellularLocation>
        <location evidence="3">Mitochondrion inner membrane</location>
        <topology evidence="3">Multi-pass membrane protein</topology>
    </subcellularLocation>
</comment>
<comment type="similarity">
    <text evidence="4">Belongs to the cytochrome c oxidase subunit 2 family.</text>
</comment>
<reference key="1">
    <citation type="journal article" date="1994" name="J. Mol. Evol.">
        <title>Evolution of the primate cytochrome c oxidase subunit II gene.</title>
        <authorList>
            <person name="Adkins R.M."/>
            <person name="Honeycutt R.L."/>
        </authorList>
    </citation>
    <scope>NUCLEOTIDE SEQUENCE [GENOMIC DNA]</scope>
</reference>
<protein>
    <recommendedName>
        <fullName>Cytochrome c oxidase subunit 2</fullName>
        <ecNumber>7.1.1.9</ecNumber>
    </recommendedName>
    <alternativeName>
        <fullName>Cytochrome c oxidase polypeptide II</fullName>
    </alternativeName>
</protein>
<name>COX2_PROTA</name>
<sequence>MAYPVQLGFQDAASPIMEELLYFHDHTLMIVFLISSLVLYIISLMLTTKLMHTSTMDAQEVETVWTILPAIILILIALPSLRILYMMDEITTPSLTLKTMGHQWYWSYEYTDYEDLSFDSYMVPSSDLKPGELRLLEVDNRIVLPTELSIRMLISSEDVLHSWAVPSLGVKTDAIPGRLNQATLMTSRPGIYYGQCSEICGANHSFMPIVLELVPLKHFEEWLLSMF</sequence>
<keyword id="KW-0186">Copper</keyword>
<keyword id="KW-0249">Electron transport</keyword>
<keyword id="KW-0460">Magnesium</keyword>
<keyword id="KW-0472">Membrane</keyword>
<keyword id="KW-0479">Metal-binding</keyword>
<keyword id="KW-0496">Mitochondrion</keyword>
<keyword id="KW-0999">Mitochondrion inner membrane</keyword>
<keyword id="KW-0679">Respiratory chain</keyword>
<keyword id="KW-1278">Translocase</keyword>
<keyword id="KW-0812">Transmembrane</keyword>
<keyword id="KW-1133">Transmembrane helix</keyword>
<keyword id="KW-0813">Transport</keyword>